<sequence length="238" mass="25405">MPLKDLPLDAQPREKLLARGPAALSDAELLAILLRTGLAGKGVLQLAQELLDDPVRDSATGRSAGGGFGGIAGLLHASSQDLQRIKGLGPAKRAELMAVLELARRALAQQLREREVFDSPQAVQHYLQLHLAGRTHEVFAVLFLDSGNRLIAMEELFRGTLTQTSVYPREVVLRALHHHAAAVVLAHNHPSGSVQPSRADEALTQTLKAALALVDVRVLDHVIVAPGAALSMAEQGLV</sequence>
<feature type="chain" id="PRO_1000070979" description="UPF0758 protein Ajs_3450">
    <location>
        <begin position="1"/>
        <end position="238"/>
    </location>
</feature>
<feature type="domain" description="MPN" evidence="1">
    <location>
        <begin position="116"/>
        <end position="238"/>
    </location>
</feature>
<feature type="short sequence motif" description="JAMM motif" evidence="1">
    <location>
        <begin position="187"/>
        <end position="200"/>
    </location>
</feature>
<feature type="binding site" evidence="1">
    <location>
        <position position="187"/>
    </location>
    <ligand>
        <name>Zn(2+)</name>
        <dbReference type="ChEBI" id="CHEBI:29105"/>
        <note>catalytic</note>
    </ligand>
</feature>
<feature type="binding site" evidence="1">
    <location>
        <position position="189"/>
    </location>
    <ligand>
        <name>Zn(2+)</name>
        <dbReference type="ChEBI" id="CHEBI:29105"/>
        <note>catalytic</note>
    </ligand>
</feature>
<feature type="binding site" evidence="1">
    <location>
        <position position="200"/>
    </location>
    <ligand>
        <name>Zn(2+)</name>
        <dbReference type="ChEBI" id="CHEBI:29105"/>
        <note>catalytic</note>
    </ligand>
</feature>
<name>Y3450_ACISJ</name>
<evidence type="ECO:0000255" key="1">
    <source>
        <dbReference type="PROSITE-ProRule" id="PRU01182"/>
    </source>
</evidence>
<evidence type="ECO:0000305" key="2"/>
<organism>
    <name type="scientific">Acidovorax sp. (strain JS42)</name>
    <dbReference type="NCBI Taxonomy" id="232721"/>
    <lineage>
        <taxon>Bacteria</taxon>
        <taxon>Pseudomonadati</taxon>
        <taxon>Pseudomonadota</taxon>
        <taxon>Betaproteobacteria</taxon>
        <taxon>Burkholderiales</taxon>
        <taxon>Comamonadaceae</taxon>
        <taxon>Acidovorax</taxon>
    </lineage>
</organism>
<reference key="1">
    <citation type="submission" date="2006-12" db="EMBL/GenBank/DDBJ databases">
        <title>Complete sequence of chromosome 1 of Acidovorax sp. JS42.</title>
        <authorList>
            <person name="Copeland A."/>
            <person name="Lucas S."/>
            <person name="Lapidus A."/>
            <person name="Barry K."/>
            <person name="Detter J.C."/>
            <person name="Glavina del Rio T."/>
            <person name="Dalin E."/>
            <person name="Tice H."/>
            <person name="Pitluck S."/>
            <person name="Chertkov O."/>
            <person name="Brettin T."/>
            <person name="Bruce D."/>
            <person name="Han C."/>
            <person name="Tapia R."/>
            <person name="Gilna P."/>
            <person name="Schmutz J."/>
            <person name="Larimer F."/>
            <person name="Land M."/>
            <person name="Hauser L."/>
            <person name="Kyrpides N."/>
            <person name="Kim E."/>
            <person name="Stahl D."/>
            <person name="Richardson P."/>
        </authorList>
    </citation>
    <scope>NUCLEOTIDE SEQUENCE [LARGE SCALE GENOMIC DNA]</scope>
    <source>
        <strain>JS42</strain>
    </source>
</reference>
<dbReference type="EMBL" id="CP000539">
    <property type="protein sequence ID" value="ABM43564.1"/>
    <property type="molecule type" value="Genomic_DNA"/>
</dbReference>
<dbReference type="SMR" id="A1WBD9"/>
<dbReference type="STRING" id="232721.Ajs_3450"/>
<dbReference type="KEGG" id="ajs:Ajs_3450"/>
<dbReference type="eggNOG" id="COG2003">
    <property type="taxonomic scope" value="Bacteria"/>
</dbReference>
<dbReference type="HOGENOM" id="CLU_073529_0_1_4"/>
<dbReference type="Proteomes" id="UP000000645">
    <property type="component" value="Chromosome"/>
</dbReference>
<dbReference type="GO" id="GO:0046872">
    <property type="term" value="F:metal ion binding"/>
    <property type="evidence" value="ECO:0007669"/>
    <property type="project" value="UniProtKB-KW"/>
</dbReference>
<dbReference type="GO" id="GO:0008237">
    <property type="term" value="F:metallopeptidase activity"/>
    <property type="evidence" value="ECO:0007669"/>
    <property type="project" value="UniProtKB-KW"/>
</dbReference>
<dbReference type="GO" id="GO:0006508">
    <property type="term" value="P:proteolysis"/>
    <property type="evidence" value="ECO:0007669"/>
    <property type="project" value="UniProtKB-KW"/>
</dbReference>
<dbReference type="CDD" id="cd08071">
    <property type="entry name" value="MPN_DUF2466"/>
    <property type="match status" value="1"/>
</dbReference>
<dbReference type="Gene3D" id="3.40.140.10">
    <property type="entry name" value="Cytidine Deaminase, domain 2"/>
    <property type="match status" value="1"/>
</dbReference>
<dbReference type="InterPro" id="IPR037518">
    <property type="entry name" value="MPN"/>
</dbReference>
<dbReference type="InterPro" id="IPR025657">
    <property type="entry name" value="RadC_JAB"/>
</dbReference>
<dbReference type="InterPro" id="IPR010994">
    <property type="entry name" value="RuvA_2-like"/>
</dbReference>
<dbReference type="InterPro" id="IPR001405">
    <property type="entry name" value="UPF0758"/>
</dbReference>
<dbReference type="InterPro" id="IPR020891">
    <property type="entry name" value="UPF0758_CS"/>
</dbReference>
<dbReference type="InterPro" id="IPR046778">
    <property type="entry name" value="UPF0758_N"/>
</dbReference>
<dbReference type="NCBIfam" id="NF000642">
    <property type="entry name" value="PRK00024.1"/>
    <property type="match status" value="1"/>
</dbReference>
<dbReference type="NCBIfam" id="TIGR00608">
    <property type="entry name" value="radc"/>
    <property type="match status" value="1"/>
</dbReference>
<dbReference type="PANTHER" id="PTHR30471">
    <property type="entry name" value="DNA REPAIR PROTEIN RADC"/>
    <property type="match status" value="1"/>
</dbReference>
<dbReference type="PANTHER" id="PTHR30471:SF3">
    <property type="entry name" value="UPF0758 PROTEIN YEES-RELATED"/>
    <property type="match status" value="1"/>
</dbReference>
<dbReference type="Pfam" id="PF04002">
    <property type="entry name" value="RadC"/>
    <property type="match status" value="1"/>
</dbReference>
<dbReference type="Pfam" id="PF20582">
    <property type="entry name" value="UPF0758_N"/>
    <property type="match status" value="1"/>
</dbReference>
<dbReference type="SUPFAM" id="SSF102712">
    <property type="entry name" value="JAB1/MPN domain"/>
    <property type="match status" value="1"/>
</dbReference>
<dbReference type="SUPFAM" id="SSF47781">
    <property type="entry name" value="RuvA domain 2-like"/>
    <property type="match status" value="1"/>
</dbReference>
<dbReference type="PROSITE" id="PS50249">
    <property type="entry name" value="MPN"/>
    <property type="match status" value="1"/>
</dbReference>
<dbReference type="PROSITE" id="PS01302">
    <property type="entry name" value="UPF0758"/>
    <property type="match status" value="1"/>
</dbReference>
<protein>
    <recommendedName>
        <fullName>UPF0758 protein Ajs_3450</fullName>
    </recommendedName>
</protein>
<gene>
    <name type="ordered locus">Ajs_3450</name>
</gene>
<proteinExistence type="inferred from homology"/>
<keyword id="KW-0378">Hydrolase</keyword>
<keyword id="KW-0479">Metal-binding</keyword>
<keyword id="KW-0482">Metalloprotease</keyword>
<keyword id="KW-0645">Protease</keyword>
<keyword id="KW-0862">Zinc</keyword>
<accession>A1WBD9</accession>
<comment type="similarity">
    <text evidence="2">Belongs to the UPF0758 family.</text>
</comment>